<proteinExistence type="inferred from homology"/>
<dbReference type="EC" id="1.17.7.3" evidence="1"/>
<dbReference type="EMBL" id="AP008955">
    <property type="protein sequence ID" value="BAH44417.1"/>
    <property type="molecule type" value="Genomic_DNA"/>
</dbReference>
<dbReference type="RefSeq" id="WP_015891719.1">
    <property type="nucleotide sequence ID" value="NC_012491.1"/>
</dbReference>
<dbReference type="SMR" id="C0ZF58"/>
<dbReference type="STRING" id="358681.BBR47_34400"/>
<dbReference type="KEGG" id="bbe:BBR47_34400"/>
<dbReference type="eggNOG" id="COG0821">
    <property type="taxonomic scope" value="Bacteria"/>
</dbReference>
<dbReference type="HOGENOM" id="CLU_042258_0_0_9"/>
<dbReference type="UniPathway" id="UPA00056">
    <property type="reaction ID" value="UER00096"/>
</dbReference>
<dbReference type="Proteomes" id="UP000001877">
    <property type="component" value="Chromosome"/>
</dbReference>
<dbReference type="GO" id="GO:0051539">
    <property type="term" value="F:4 iron, 4 sulfur cluster binding"/>
    <property type="evidence" value="ECO:0007669"/>
    <property type="project" value="UniProtKB-UniRule"/>
</dbReference>
<dbReference type="GO" id="GO:0046429">
    <property type="term" value="F:4-hydroxy-3-methylbut-2-en-1-yl diphosphate synthase activity (ferredoxin)"/>
    <property type="evidence" value="ECO:0007669"/>
    <property type="project" value="UniProtKB-UniRule"/>
</dbReference>
<dbReference type="GO" id="GO:0141197">
    <property type="term" value="F:4-hydroxy-3-methylbut-2-enyl-diphosphate synthase activity (flavodoxin)"/>
    <property type="evidence" value="ECO:0007669"/>
    <property type="project" value="UniProtKB-EC"/>
</dbReference>
<dbReference type="GO" id="GO:0005506">
    <property type="term" value="F:iron ion binding"/>
    <property type="evidence" value="ECO:0007669"/>
    <property type="project" value="InterPro"/>
</dbReference>
<dbReference type="GO" id="GO:0019288">
    <property type="term" value="P:isopentenyl diphosphate biosynthetic process, methylerythritol 4-phosphate pathway"/>
    <property type="evidence" value="ECO:0007669"/>
    <property type="project" value="UniProtKB-UniRule"/>
</dbReference>
<dbReference type="GO" id="GO:0016114">
    <property type="term" value="P:terpenoid biosynthetic process"/>
    <property type="evidence" value="ECO:0007669"/>
    <property type="project" value="InterPro"/>
</dbReference>
<dbReference type="FunFam" id="3.20.20.20:FF:000001">
    <property type="entry name" value="4-hydroxy-3-methylbut-2-en-1-yl diphosphate synthase (flavodoxin)"/>
    <property type="match status" value="1"/>
</dbReference>
<dbReference type="FunFam" id="3.30.413.10:FF:000005">
    <property type="entry name" value="4-hydroxy-3-methylbut-2-en-1-yl diphosphate synthase (flavodoxin)"/>
    <property type="match status" value="1"/>
</dbReference>
<dbReference type="Gene3D" id="3.20.20.20">
    <property type="entry name" value="Dihydropteroate synthase-like"/>
    <property type="match status" value="1"/>
</dbReference>
<dbReference type="Gene3D" id="3.30.413.10">
    <property type="entry name" value="Sulfite Reductase Hemoprotein, domain 1"/>
    <property type="match status" value="1"/>
</dbReference>
<dbReference type="HAMAP" id="MF_00159">
    <property type="entry name" value="IspG"/>
    <property type="match status" value="1"/>
</dbReference>
<dbReference type="InterPro" id="IPR011005">
    <property type="entry name" value="Dihydropteroate_synth-like_sf"/>
</dbReference>
<dbReference type="InterPro" id="IPR036849">
    <property type="entry name" value="Enolase-like_C_sf"/>
</dbReference>
<dbReference type="InterPro" id="IPR016425">
    <property type="entry name" value="IspG_bac"/>
</dbReference>
<dbReference type="InterPro" id="IPR004588">
    <property type="entry name" value="IspG_bac-typ"/>
</dbReference>
<dbReference type="InterPro" id="IPR045854">
    <property type="entry name" value="NO2/SO3_Rdtase_4Fe4S_sf"/>
</dbReference>
<dbReference type="NCBIfam" id="TIGR00612">
    <property type="entry name" value="ispG_gcpE"/>
    <property type="match status" value="1"/>
</dbReference>
<dbReference type="NCBIfam" id="NF001540">
    <property type="entry name" value="PRK00366.1"/>
    <property type="match status" value="1"/>
</dbReference>
<dbReference type="PANTHER" id="PTHR30454">
    <property type="entry name" value="4-HYDROXY-3-METHYLBUT-2-EN-1-YL DIPHOSPHATE SYNTHASE"/>
    <property type="match status" value="1"/>
</dbReference>
<dbReference type="PANTHER" id="PTHR30454:SF0">
    <property type="entry name" value="4-HYDROXY-3-METHYLBUT-2-EN-1-YL DIPHOSPHATE SYNTHASE (FERREDOXIN), CHLOROPLASTIC"/>
    <property type="match status" value="1"/>
</dbReference>
<dbReference type="Pfam" id="PF04551">
    <property type="entry name" value="GcpE"/>
    <property type="match status" value="1"/>
</dbReference>
<dbReference type="PIRSF" id="PIRSF004640">
    <property type="entry name" value="IspG"/>
    <property type="match status" value="1"/>
</dbReference>
<dbReference type="SUPFAM" id="SSF51604">
    <property type="entry name" value="Enolase C-terminal domain-like"/>
    <property type="match status" value="1"/>
</dbReference>
<dbReference type="SUPFAM" id="SSF56014">
    <property type="entry name" value="Nitrite and sulphite reductase 4Fe-4S domain-like"/>
    <property type="match status" value="1"/>
</dbReference>
<evidence type="ECO:0000255" key="1">
    <source>
        <dbReference type="HAMAP-Rule" id="MF_00159"/>
    </source>
</evidence>
<accession>C0ZF58</accession>
<sequence>MFKREETKPVFVGGVQIGGQKSVVIQSMTTADTRDVEKTLAEIQRLHDVGCQIVRLAVINEDAARAIKKIKERSPLPLVADIHFDHKLALIALESGIDKIRINPGNIGSKEKTQRVVEACRERNVPIRIGVNSGSVEKRLLDKYGYPSPEAIVESAMDHVQILEDLNYDNIVISLKSSDVPTMIQTYSLMAQKRNYPLHVGVTEAGTQFSGSIKSSVGIGTVLSMGIGDTIRVSLTADPVEEIKVAKQILRSLDIVNNDPVVIACPSCGRCAIDLIGLATKVEDAVSTLKVPLKVAVMGCAVNGPGEAREADVGVAGGNGEGLIFRNGEIVRKVKETELFEELMKEINEIVNEQKPTTVG</sequence>
<reference key="1">
    <citation type="submission" date="2005-03" db="EMBL/GenBank/DDBJ databases">
        <title>Brevibacillus brevis strain 47, complete genome.</title>
        <authorList>
            <person name="Hosoyama A."/>
            <person name="Yamada R."/>
            <person name="Hongo Y."/>
            <person name="Terui Y."/>
            <person name="Ankai A."/>
            <person name="Masuyama W."/>
            <person name="Sekiguchi M."/>
            <person name="Takeda T."/>
            <person name="Asano K."/>
            <person name="Ohji S."/>
            <person name="Ichikawa N."/>
            <person name="Narita S."/>
            <person name="Aoki N."/>
            <person name="Miura H."/>
            <person name="Matsushita S."/>
            <person name="Sekigawa T."/>
            <person name="Yamagata H."/>
            <person name="Yoshikawa H."/>
            <person name="Udaka S."/>
            <person name="Tanikawa S."/>
            <person name="Fujita N."/>
        </authorList>
    </citation>
    <scope>NUCLEOTIDE SEQUENCE [LARGE SCALE GENOMIC DNA]</scope>
    <source>
        <strain>47 / JCM 6285 / NBRC 100599</strain>
    </source>
</reference>
<name>ISPG_BREBN</name>
<comment type="function">
    <text evidence="1">Converts 2C-methyl-D-erythritol 2,4-cyclodiphosphate (ME-2,4cPP) into 1-hydroxy-2-methyl-2-(E)-butenyl 4-diphosphate.</text>
</comment>
<comment type="catalytic activity">
    <reaction evidence="1">
        <text>(2E)-4-hydroxy-3-methylbut-2-enyl diphosphate + oxidized [flavodoxin] + H2O + 2 H(+) = 2-C-methyl-D-erythritol 2,4-cyclic diphosphate + reduced [flavodoxin]</text>
        <dbReference type="Rhea" id="RHEA:43604"/>
        <dbReference type="Rhea" id="RHEA-COMP:10622"/>
        <dbReference type="Rhea" id="RHEA-COMP:10623"/>
        <dbReference type="ChEBI" id="CHEBI:15377"/>
        <dbReference type="ChEBI" id="CHEBI:15378"/>
        <dbReference type="ChEBI" id="CHEBI:57618"/>
        <dbReference type="ChEBI" id="CHEBI:58210"/>
        <dbReference type="ChEBI" id="CHEBI:58483"/>
        <dbReference type="ChEBI" id="CHEBI:128753"/>
        <dbReference type="EC" id="1.17.7.3"/>
    </reaction>
</comment>
<comment type="cofactor">
    <cofactor evidence="1">
        <name>[4Fe-4S] cluster</name>
        <dbReference type="ChEBI" id="CHEBI:49883"/>
    </cofactor>
    <text evidence="1">Binds 1 [4Fe-4S] cluster.</text>
</comment>
<comment type="pathway">
    <text evidence="1">Isoprenoid biosynthesis; isopentenyl diphosphate biosynthesis via DXP pathway; isopentenyl diphosphate from 1-deoxy-D-xylulose 5-phosphate: step 5/6.</text>
</comment>
<comment type="similarity">
    <text evidence="1">Belongs to the IspG family.</text>
</comment>
<protein>
    <recommendedName>
        <fullName evidence="1">4-hydroxy-3-methylbut-2-en-1-yl diphosphate synthase (flavodoxin)</fullName>
        <ecNumber evidence="1">1.17.7.3</ecNumber>
    </recommendedName>
    <alternativeName>
        <fullName evidence="1">1-hydroxy-2-methyl-2-(E)-butenyl 4-diphosphate synthase</fullName>
    </alternativeName>
</protein>
<gene>
    <name evidence="1" type="primary">ispG</name>
    <name type="ordered locus">BBR47_34400</name>
</gene>
<organism>
    <name type="scientific">Brevibacillus brevis (strain 47 / JCM 6285 / NBRC 100599)</name>
    <dbReference type="NCBI Taxonomy" id="358681"/>
    <lineage>
        <taxon>Bacteria</taxon>
        <taxon>Bacillati</taxon>
        <taxon>Bacillota</taxon>
        <taxon>Bacilli</taxon>
        <taxon>Bacillales</taxon>
        <taxon>Paenibacillaceae</taxon>
        <taxon>Brevibacillus</taxon>
    </lineage>
</organism>
<feature type="chain" id="PRO_1000123437" description="4-hydroxy-3-methylbut-2-en-1-yl diphosphate synthase (flavodoxin)">
    <location>
        <begin position="1"/>
        <end position="360"/>
    </location>
</feature>
<feature type="binding site" evidence="1">
    <location>
        <position position="265"/>
    </location>
    <ligand>
        <name>[4Fe-4S] cluster</name>
        <dbReference type="ChEBI" id="CHEBI:49883"/>
    </ligand>
</feature>
<feature type="binding site" evidence="1">
    <location>
        <position position="268"/>
    </location>
    <ligand>
        <name>[4Fe-4S] cluster</name>
        <dbReference type="ChEBI" id="CHEBI:49883"/>
    </ligand>
</feature>
<feature type="binding site" evidence="1">
    <location>
        <position position="300"/>
    </location>
    <ligand>
        <name>[4Fe-4S] cluster</name>
        <dbReference type="ChEBI" id="CHEBI:49883"/>
    </ligand>
</feature>
<feature type="binding site" evidence="1">
    <location>
        <position position="307"/>
    </location>
    <ligand>
        <name>[4Fe-4S] cluster</name>
        <dbReference type="ChEBI" id="CHEBI:49883"/>
    </ligand>
</feature>
<keyword id="KW-0004">4Fe-4S</keyword>
<keyword id="KW-0408">Iron</keyword>
<keyword id="KW-0411">Iron-sulfur</keyword>
<keyword id="KW-0414">Isoprene biosynthesis</keyword>
<keyword id="KW-0479">Metal-binding</keyword>
<keyword id="KW-0560">Oxidoreductase</keyword>
<keyword id="KW-1185">Reference proteome</keyword>